<gene>
    <name evidence="1" type="primary">cofE</name>
    <name type="ordered locus">MMP0937</name>
</gene>
<name>COFE_METMP</name>
<keyword id="KW-0342">GTP-binding</keyword>
<keyword id="KW-0436">Ligase</keyword>
<keyword id="KW-0460">Magnesium</keyword>
<keyword id="KW-0464">Manganese</keyword>
<keyword id="KW-0479">Metal-binding</keyword>
<keyword id="KW-0547">Nucleotide-binding</keyword>
<keyword id="KW-0630">Potassium</keyword>
<keyword id="KW-1185">Reference proteome</keyword>
<comment type="function">
    <text evidence="1">Catalyzes the GTP-dependent successive addition of two or more gamma-linked L-glutamates to the L-lactyl phosphodiester of 7,8-didemethyl-8-hydroxy-5-deazariboflavin (F420-0) to form coenzyme F420-0-glutamyl-glutamate (F420-2) or polyglutamated F420 derivatives.</text>
</comment>
<comment type="catalytic activity">
    <reaction evidence="1">
        <text>oxidized coenzyme F420-0 + GTP + L-glutamate = oxidized coenzyme F420-1 + GDP + phosphate + H(+)</text>
        <dbReference type="Rhea" id="RHEA:30555"/>
        <dbReference type="ChEBI" id="CHEBI:15378"/>
        <dbReference type="ChEBI" id="CHEBI:29985"/>
        <dbReference type="ChEBI" id="CHEBI:37565"/>
        <dbReference type="ChEBI" id="CHEBI:43474"/>
        <dbReference type="ChEBI" id="CHEBI:58189"/>
        <dbReference type="ChEBI" id="CHEBI:59907"/>
        <dbReference type="ChEBI" id="CHEBI:59920"/>
        <dbReference type="EC" id="6.3.2.31"/>
    </reaction>
</comment>
<comment type="catalytic activity">
    <reaction evidence="1">
        <text>oxidized coenzyme F420-1 + GTP + L-glutamate = oxidized coenzyme F420-2 + GDP + phosphate + H(+)</text>
        <dbReference type="Rhea" id="RHEA:30523"/>
        <dbReference type="ChEBI" id="CHEBI:15378"/>
        <dbReference type="ChEBI" id="CHEBI:29985"/>
        <dbReference type="ChEBI" id="CHEBI:37565"/>
        <dbReference type="ChEBI" id="CHEBI:43474"/>
        <dbReference type="ChEBI" id="CHEBI:57922"/>
        <dbReference type="ChEBI" id="CHEBI:58189"/>
        <dbReference type="ChEBI" id="CHEBI:59920"/>
        <dbReference type="EC" id="6.3.2.34"/>
    </reaction>
</comment>
<comment type="cofactor">
    <cofactor evidence="1">
        <name>Mg(2+)</name>
        <dbReference type="ChEBI" id="CHEBI:18420"/>
    </cofactor>
    <cofactor evidence="1">
        <name>Mn(2+)</name>
        <dbReference type="ChEBI" id="CHEBI:29035"/>
    </cofactor>
    <text evidence="1">Binds 2 divalent metal cations per subunit. The ions could be magnesium and/or manganese.</text>
</comment>
<comment type="cofactor">
    <cofactor evidence="1">
        <name>K(+)</name>
        <dbReference type="ChEBI" id="CHEBI:29103"/>
    </cofactor>
    <text evidence="1">Monovalent cation. The ion could be potassium.</text>
</comment>
<comment type="pathway">
    <text evidence="1">Cofactor biosynthesis; coenzyme F420 biosynthesis.</text>
</comment>
<comment type="subunit">
    <text evidence="1">Homodimer.</text>
</comment>
<comment type="similarity">
    <text evidence="1">Belongs to the CofE family.</text>
</comment>
<proteinExistence type="inferred from homology"/>
<accession>Q6LYQ1</accession>
<evidence type="ECO:0000255" key="1">
    <source>
        <dbReference type="HAMAP-Rule" id="MF_01258"/>
    </source>
</evidence>
<feature type="chain" id="PRO_0000145792" description="Coenzyme F420:L-glutamate ligase">
    <location>
        <begin position="1"/>
        <end position="248"/>
    </location>
</feature>
<feature type="binding site" evidence="1">
    <location>
        <begin position="15"/>
        <end position="18"/>
    </location>
    <ligand>
        <name>GTP</name>
        <dbReference type="ChEBI" id="CHEBI:37565"/>
    </ligand>
</feature>
<feature type="binding site" evidence="1">
    <location>
        <begin position="45"/>
        <end position="46"/>
    </location>
    <ligand>
        <name>GTP</name>
        <dbReference type="ChEBI" id="CHEBI:37565"/>
    </ligand>
</feature>
<feature type="binding site" evidence="1">
    <location>
        <position position="50"/>
    </location>
    <ligand>
        <name>GTP</name>
        <dbReference type="ChEBI" id="CHEBI:37565"/>
    </ligand>
</feature>
<feature type="binding site" evidence="1">
    <location>
        <position position="115"/>
    </location>
    <ligand>
        <name>a divalent metal cation</name>
        <dbReference type="ChEBI" id="CHEBI:60240"/>
        <label>1</label>
    </ligand>
</feature>
<feature type="binding site" evidence="1">
    <location>
        <position position="118"/>
    </location>
    <ligand>
        <name>GTP</name>
        <dbReference type="ChEBI" id="CHEBI:37565"/>
    </ligand>
</feature>
<feature type="binding site" evidence="1">
    <location>
        <position position="155"/>
    </location>
    <ligand>
        <name>a divalent metal cation</name>
        <dbReference type="ChEBI" id="CHEBI:60240"/>
        <label>1</label>
    </ligand>
</feature>
<feature type="binding site" evidence="1">
    <location>
        <position position="156"/>
    </location>
    <ligand>
        <name>a divalent metal cation</name>
        <dbReference type="ChEBI" id="CHEBI:60240"/>
        <label>2</label>
    </ligand>
</feature>
<feature type="binding site" evidence="1">
    <location>
        <begin position="211"/>
        <end position="218"/>
    </location>
    <ligand>
        <name>GTP</name>
        <dbReference type="ChEBI" id="CHEBI:37565"/>
    </ligand>
</feature>
<feature type="binding site" evidence="1">
    <location>
        <position position="213"/>
    </location>
    <ligand>
        <name>a divalent metal cation</name>
        <dbReference type="ChEBI" id="CHEBI:60240"/>
        <label>2</label>
    </ligand>
</feature>
<reference key="1">
    <citation type="journal article" date="2004" name="J. Bacteriol.">
        <title>Complete genome sequence of the genetically tractable hydrogenotrophic methanogen Methanococcus maripaludis.</title>
        <authorList>
            <person name="Hendrickson E.L."/>
            <person name="Kaul R."/>
            <person name="Zhou Y."/>
            <person name="Bovee D."/>
            <person name="Chapman P."/>
            <person name="Chung J."/>
            <person name="Conway de Macario E."/>
            <person name="Dodsworth J.A."/>
            <person name="Gillett W."/>
            <person name="Graham D.E."/>
            <person name="Hackett M."/>
            <person name="Haydock A.K."/>
            <person name="Kang A."/>
            <person name="Land M.L."/>
            <person name="Levy R."/>
            <person name="Lie T.J."/>
            <person name="Major T.A."/>
            <person name="Moore B.C."/>
            <person name="Porat I."/>
            <person name="Palmeiri A."/>
            <person name="Rouse G."/>
            <person name="Saenphimmachak C."/>
            <person name="Soell D."/>
            <person name="Van Dien S."/>
            <person name="Wang T."/>
            <person name="Whitman W.B."/>
            <person name="Xia Q."/>
            <person name="Zhang Y."/>
            <person name="Larimer F.W."/>
            <person name="Olson M.V."/>
            <person name="Leigh J.A."/>
        </authorList>
    </citation>
    <scope>NUCLEOTIDE SEQUENCE [LARGE SCALE GENOMIC DNA]</scope>
    <source>
        <strain>DSM 14266 / JCM 13030 / NBRC 101832 / S2 / LL</strain>
    </source>
</reference>
<organism>
    <name type="scientific">Methanococcus maripaludis (strain DSM 14266 / JCM 13030 / NBRC 101832 / S2 / LL)</name>
    <dbReference type="NCBI Taxonomy" id="267377"/>
    <lineage>
        <taxon>Archaea</taxon>
        <taxon>Methanobacteriati</taxon>
        <taxon>Methanobacteriota</taxon>
        <taxon>Methanomada group</taxon>
        <taxon>Methanococci</taxon>
        <taxon>Methanococcales</taxon>
        <taxon>Methanococcaceae</taxon>
        <taxon>Methanococcus</taxon>
    </lineage>
</organism>
<dbReference type="EC" id="6.3.2.31" evidence="1"/>
<dbReference type="EC" id="6.3.2.34" evidence="1"/>
<dbReference type="EMBL" id="BX950229">
    <property type="protein sequence ID" value="CAF30493.1"/>
    <property type="molecule type" value="Genomic_DNA"/>
</dbReference>
<dbReference type="RefSeq" id="WP_011170881.1">
    <property type="nucleotide sequence ID" value="NC_005791.1"/>
</dbReference>
<dbReference type="SMR" id="Q6LYQ1"/>
<dbReference type="STRING" id="267377.MMP0937"/>
<dbReference type="EnsemblBacteria" id="CAF30493">
    <property type="protein sequence ID" value="CAF30493"/>
    <property type="gene ID" value="MMP0937"/>
</dbReference>
<dbReference type="GeneID" id="2762650"/>
<dbReference type="KEGG" id="mmp:MMP0937"/>
<dbReference type="PATRIC" id="fig|267377.15.peg.965"/>
<dbReference type="eggNOG" id="arCOG02714">
    <property type="taxonomic scope" value="Archaea"/>
</dbReference>
<dbReference type="HOGENOM" id="CLU_051152_1_1_2"/>
<dbReference type="OrthoDB" id="11383at2157"/>
<dbReference type="UniPathway" id="UPA00071"/>
<dbReference type="Proteomes" id="UP000000590">
    <property type="component" value="Chromosome"/>
</dbReference>
<dbReference type="GO" id="GO:0052618">
    <property type="term" value="F:coenzyme F420-0:L-glutamate ligase activity"/>
    <property type="evidence" value="ECO:0007669"/>
    <property type="project" value="UniProtKB-UniRule"/>
</dbReference>
<dbReference type="GO" id="GO:0052619">
    <property type="term" value="F:coenzyme F420-1:gamma-L-glutamate ligase activity"/>
    <property type="evidence" value="ECO:0007669"/>
    <property type="project" value="UniProtKB-UniRule"/>
</dbReference>
<dbReference type="GO" id="GO:0005525">
    <property type="term" value="F:GTP binding"/>
    <property type="evidence" value="ECO:0007669"/>
    <property type="project" value="UniProtKB-KW"/>
</dbReference>
<dbReference type="GO" id="GO:0046872">
    <property type="term" value="F:metal ion binding"/>
    <property type="evidence" value="ECO:0007669"/>
    <property type="project" value="UniProtKB-KW"/>
</dbReference>
<dbReference type="GO" id="GO:0052645">
    <property type="term" value="P:F420-0 metabolic process"/>
    <property type="evidence" value="ECO:0007669"/>
    <property type="project" value="UniProtKB-UniRule"/>
</dbReference>
<dbReference type="Gene3D" id="3.30.1330.100">
    <property type="entry name" value="CofE-like"/>
    <property type="match status" value="1"/>
</dbReference>
<dbReference type="Gene3D" id="3.90.1660.10">
    <property type="entry name" value="CofE-like domain"/>
    <property type="match status" value="1"/>
</dbReference>
<dbReference type="HAMAP" id="MF_01258">
    <property type="entry name" value="F420_ligase_CofE"/>
    <property type="match status" value="1"/>
</dbReference>
<dbReference type="InterPro" id="IPR008225">
    <property type="entry name" value="F420-0_g-glutamyl_ligase"/>
</dbReference>
<dbReference type="InterPro" id="IPR002847">
    <property type="entry name" value="F420-0_gamma-glut_ligase-dom"/>
</dbReference>
<dbReference type="InterPro" id="IPR023659">
    <property type="entry name" value="F420_ligase_CofE_arc"/>
</dbReference>
<dbReference type="NCBIfam" id="TIGR01916">
    <property type="entry name" value="F420_cofE"/>
    <property type="match status" value="1"/>
</dbReference>
<dbReference type="NCBIfam" id="NF009809">
    <property type="entry name" value="PRK13293.1"/>
    <property type="match status" value="1"/>
</dbReference>
<dbReference type="PANTHER" id="PTHR47917">
    <property type="match status" value="1"/>
</dbReference>
<dbReference type="PANTHER" id="PTHR47917:SF1">
    <property type="entry name" value="COENZYME F420:L-GLUTAMATE LIGASE"/>
    <property type="match status" value="1"/>
</dbReference>
<dbReference type="Pfam" id="PF01996">
    <property type="entry name" value="F420_ligase"/>
    <property type="match status" value="1"/>
</dbReference>
<dbReference type="SUPFAM" id="SSF144010">
    <property type="entry name" value="CofE-like"/>
    <property type="match status" value="1"/>
</dbReference>
<protein>
    <recommendedName>
        <fullName evidence="1">Coenzyme F420:L-glutamate ligase</fullName>
        <ecNumber evidence="1">6.3.2.31</ecNumber>
        <ecNumber evidence="1">6.3.2.34</ecNumber>
    </recommendedName>
    <alternativeName>
        <fullName evidence="1">Coenzyme F420-0:L-glutamate ligase</fullName>
    </alternativeName>
    <alternativeName>
        <fullName evidence="1">Coenzyme F420-1:gamma-L-glutamate ligase</fullName>
    </alternativeName>
</protein>
<sequence length="248" mass="26989">MIKERVKMEVIGLEIPLISGNEDYTLAELISTYPLEDKDVIVIAETVVSKIEKNVILKNEITPSNEAMELSKKLGKEPEVVQVILDESNEIVKLGPNFIITETKHGFVCANSGVDESNTSKGIKPLPKNPDKSAEEIRMGIEKITGKKVGVIINDSMGRPFRKGSCGIAIGVSGVCGLWDRKGEKDLFGRELKTTEVGIADELAATASAVMGQSNEGIPLVIIRNAPVPFTNGTGKELIRKKEEDVFR</sequence>